<proteinExistence type="inferred from homology"/>
<gene>
    <name evidence="1" type="primary">prfA</name>
    <name type="ordered locus">CPF_2466</name>
</gene>
<organism>
    <name type="scientific">Clostridium perfringens (strain ATCC 13124 / DSM 756 / JCM 1290 / NCIMB 6125 / NCTC 8237 / Type A)</name>
    <dbReference type="NCBI Taxonomy" id="195103"/>
    <lineage>
        <taxon>Bacteria</taxon>
        <taxon>Bacillati</taxon>
        <taxon>Bacillota</taxon>
        <taxon>Clostridia</taxon>
        <taxon>Eubacteriales</taxon>
        <taxon>Clostridiaceae</taxon>
        <taxon>Clostridium</taxon>
    </lineage>
</organism>
<keyword id="KW-0963">Cytoplasm</keyword>
<keyword id="KW-0488">Methylation</keyword>
<keyword id="KW-0648">Protein biosynthesis</keyword>
<sequence>MILDRLNFIENKYDELSVKISDPSIMANQKEWRKLCKEHADLEVIVNKYKEYKEATEELEANKEMLSEESDQEMREMINSEIKDLTERKKELEDEIQILLLPKDPNDDKNVFVEIRGGAGGDEAALFAANLFRMYTKYAEKNRWKVELMSANETDIGGFKEVVFMIKGAGAYSKLKYESGAHRVQRVPDTESSGRIHTSTATVAVLPEVDDVEIEINDKDIKIDVFRASGNGGQCVNTTDSAVRITHLPSGLVVSCQDEKSQLKNKEKAMKVLRARLFEQAEAERLAGIAEDRKSQVGTGDRSERIRTYNYPQGRVTDHRINMTLYKLDSFLEGDIDEILNALITEDQAQKMKAMGNTEF</sequence>
<name>RF1_CLOP1</name>
<feature type="chain" id="PRO_0000263256" description="Peptide chain release factor 1">
    <location>
        <begin position="1"/>
        <end position="360"/>
    </location>
</feature>
<feature type="modified residue" description="N5-methylglutamine" evidence="1">
    <location>
        <position position="234"/>
    </location>
</feature>
<reference key="1">
    <citation type="journal article" date="2006" name="Genome Res.">
        <title>Skewed genomic variability in strains of the toxigenic bacterial pathogen, Clostridium perfringens.</title>
        <authorList>
            <person name="Myers G.S.A."/>
            <person name="Rasko D.A."/>
            <person name="Cheung J.K."/>
            <person name="Ravel J."/>
            <person name="Seshadri R."/>
            <person name="DeBoy R.T."/>
            <person name="Ren Q."/>
            <person name="Varga J."/>
            <person name="Awad M.M."/>
            <person name="Brinkac L.M."/>
            <person name="Daugherty S.C."/>
            <person name="Haft D.H."/>
            <person name="Dodson R.J."/>
            <person name="Madupu R."/>
            <person name="Nelson W.C."/>
            <person name="Rosovitz M.J."/>
            <person name="Sullivan S.A."/>
            <person name="Khouri H."/>
            <person name="Dimitrov G.I."/>
            <person name="Watkins K.L."/>
            <person name="Mulligan S."/>
            <person name="Benton J."/>
            <person name="Radune D."/>
            <person name="Fisher D.J."/>
            <person name="Atkins H.S."/>
            <person name="Hiscox T."/>
            <person name="Jost B.H."/>
            <person name="Billington S.J."/>
            <person name="Songer J.G."/>
            <person name="McClane B.A."/>
            <person name="Titball R.W."/>
            <person name="Rood J.I."/>
            <person name="Melville S.B."/>
            <person name="Paulsen I.T."/>
        </authorList>
    </citation>
    <scope>NUCLEOTIDE SEQUENCE [LARGE SCALE GENOMIC DNA]</scope>
    <source>
        <strain>ATCC 13124 / DSM 756 / JCM 1290 / NCIMB 6125 / NCTC 8237 / S 107 / Type A</strain>
    </source>
</reference>
<comment type="function">
    <text evidence="1">Peptide chain release factor 1 directs the termination of translation in response to the peptide chain termination codons UAG and UAA.</text>
</comment>
<comment type="subcellular location">
    <subcellularLocation>
        <location evidence="1">Cytoplasm</location>
    </subcellularLocation>
</comment>
<comment type="PTM">
    <text evidence="1">Methylated by PrmC. Methylation increases the termination efficiency of RF1.</text>
</comment>
<comment type="similarity">
    <text evidence="1">Belongs to the prokaryotic/mitochondrial release factor family.</text>
</comment>
<accession>Q0TNB0</accession>
<evidence type="ECO:0000255" key="1">
    <source>
        <dbReference type="HAMAP-Rule" id="MF_00093"/>
    </source>
</evidence>
<protein>
    <recommendedName>
        <fullName evidence="1">Peptide chain release factor 1</fullName>
        <shortName evidence="1">RF-1</shortName>
    </recommendedName>
</protein>
<dbReference type="EMBL" id="CP000246">
    <property type="protein sequence ID" value="ABG83224.1"/>
    <property type="molecule type" value="Genomic_DNA"/>
</dbReference>
<dbReference type="RefSeq" id="WP_003452315.1">
    <property type="nucleotide sequence ID" value="NC_008261.1"/>
</dbReference>
<dbReference type="SMR" id="Q0TNB0"/>
<dbReference type="STRING" id="195103.CPF_2466"/>
<dbReference type="PaxDb" id="195103-CPF_2466"/>
<dbReference type="GeneID" id="93001256"/>
<dbReference type="KEGG" id="cpf:CPF_2466"/>
<dbReference type="eggNOG" id="COG0216">
    <property type="taxonomic scope" value="Bacteria"/>
</dbReference>
<dbReference type="HOGENOM" id="CLU_036856_0_1_9"/>
<dbReference type="Proteomes" id="UP000001823">
    <property type="component" value="Chromosome"/>
</dbReference>
<dbReference type="GO" id="GO:0005737">
    <property type="term" value="C:cytoplasm"/>
    <property type="evidence" value="ECO:0007669"/>
    <property type="project" value="UniProtKB-SubCell"/>
</dbReference>
<dbReference type="GO" id="GO:0016149">
    <property type="term" value="F:translation release factor activity, codon specific"/>
    <property type="evidence" value="ECO:0007669"/>
    <property type="project" value="UniProtKB-UniRule"/>
</dbReference>
<dbReference type="FunFam" id="3.30.160.20:FF:000004">
    <property type="entry name" value="Peptide chain release factor 1"/>
    <property type="match status" value="1"/>
</dbReference>
<dbReference type="FunFam" id="3.30.70.1660:FF:000002">
    <property type="entry name" value="Peptide chain release factor 1"/>
    <property type="match status" value="1"/>
</dbReference>
<dbReference type="FunFam" id="3.30.70.1660:FF:000004">
    <property type="entry name" value="Peptide chain release factor 1"/>
    <property type="match status" value="1"/>
</dbReference>
<dbReference type="Gene3D" id="3.30.160.20">
    <property type="match status" value="1"/>
</dbReference>
<dbReference type="Gene3D" id="3.30.70.1660">
    <property type="match status" value="1"/>
</dbReference>
<dbReference type="Gene3D" id="6.10.140.1950">
    <property type="match status" value="1"/>
</dbReference>
<dbReference type="HAMAP" id="MF_00093">
    <property type="entry name" value="Rel_fac_1"/>
    <property type="match status" value="1"/>
</dbReference>
<dbReference type="InterPro" id="IPR005139">
    <property type="entry name" value="PCRF"/>
</dbReference>
<dbReference type="InterPro" id="IPR000352">
    <property type="entry name" value="Pep_chain_release_fac_I"/>
</dbReference>
<dbReference type="InterPro" id="IPR045853">
    <property type="entry name" value="Pep_chain_release_fac_I_sf"/>
</dbReference>
<dbReference type="InterPro" id="IPR050057">
    <property type="entry name" value="Prokaryotic/Mito_RF"/>
</dbReference>
<dbReference type="InterPro" id="IPR004373">
    <property type="entry name" value="RF-1"/>
</dbReference>
<dbReference type="NCBIfam" id="TIGR00019">
    <property type="entry name" value="prfA"/>
    <property type="match status" value="1"/>
</dbReference>
<dbReference type="NCBIfam" id="NF001859">
    <property type="entry name" value="PRK00591.1"/>
    <property type="match status" value="1"/>
</dbReference>
<dbReference type="PANTHER" id="PTHR43804">
    <property type="entry name" value="LD18447P"/>
    <property type="match status" value="1"/>
</dbReference>
<dbReference type="PANTHER" id="PTHR43804:SF7">
    <property type="entry name" value="LD18447P"/>
    <property type="match status" value="1"/>
</dbReference>
<dbReference type="Pfam" id="PF03462">
    <property type="entry name" value="PCRF"/>
    <property type="match status" value="1"/>
</dbReference>
<dbReference type="Pfam" id="PF00472">
    <property type="entry name" value="RF-1"/>
    <property type="match status" value="1"/>
</dbReference>
<dbReference type="SMART" id="SM00937">
    <property type="entry name" value="PCRF"/>
    <property type="match status" value="1"/>
</dbReference>
<dbReference type="SUPFAM" id="SSF75620">
    <property type="entry name" value="Release factor"/>
    <property type="match status" value="1"/>
</dbReference>
<dbReference type="PROSITE" id="PS00745">
    <property type="entry name" value="RF_PROK_I"/>
    <property type="match status" value="1"/>
</dbReference>